<sequence>MADDTPIIEEIAEQNESVTRIMQRLKHDMQRVTSVPGFNTSAAGVNDLIDILNQYKKELEDDAANDYTEAHIHKIRLVTGKRNQYVLKLKQAEDEYHARKEQARRRASSMDFTVGRNSTNLVDYSHGRHHMPSYRRHDSSDEENYSMDGTNGDGNRAGPSNPDRGNRTGPSSSDRVRMRAGRNRVTKTRRYRPGQKALEEIRKYQKTEDLLIQKAPFARLVREIMQTSTPFGADCRIRSDAISALQEAAEAFLVEMFEGSSLISTHAKRVTLMTTDIQLYRRLCLRHL</sequence>
<reference key="1">
    <citation type="journal article" date="1994" name="Nature">
        <title>2.2 Mb of contiguous nucleotide sequence from chromosome III of C. elegans.</title>
        <authorList>
            <person name="Wilson R."/>
            <person name="Ainscough R."/>
            <person name="Anderson K."/>
            <person name="Baynes C."/>
            <person name="Berks M."/>
            <person name="Bonfield J."/>
            <person name="Burton J."/>
            <person name="Connell M."/>
            <person name="Copsey T."/>
            <person name="Cooper J."/>
            <person name="Coulson A."/>
            <person name="Craxton M."/>
            <person name="Dear S."/>
            <person name="Du Z."/>
            <person name="Durbin R."/>
            <person name="Favello A."/>
            <person name="Fraser A."/>
            <person name="Fulton L."/>
            <person name="Gardner A."/>
            <person name="Green P."/>
            <person name="Hawkins T."/>
            <person name="Hillier L."/>
            <person name="Jier M."/>
            <person name="Johnston L."/>
            <person name="Jones M."/>
            <person name="Kershaw J."/>
            <person name="Kirsten J."/>
            <person name="Laisster N."/>
            <person name="Latreille P."/>
            <person name="Lightning J."/>
            <person name="Lloyd C."/>
            <person name="Mortimore B."/>
            <person name="O'Callaghan M."/>
            <person name="Parsons J."/>
            <person name="Percy C."/>
            <person name="Rifken L."/>
            <person name="Roopra A."/>
            <person name="Saunders D."/>
            <person name="Shownkeen R."/>
            <person name="Sims M."/>
            <person name="Smaldon N."/>
            <person name="Smith A."/>
            <person name="Smith M."/>
            <person name="Sonnhammer E."/>
            <person name="Staden R."/>
            <person name="Sulston J."/>
            <person name="Thierry-Mieg J."/>
            <person name="Thomas K."/>
            <person name="Vaudin M."/>
            <person name="Vaughan K."/>
            <person name="Waterston R."/>
            <person name="Watson A."/>
            <person name="Weinstock L."/>
            <person name="Wilkinson-Sproat J."/>
            <person name="Wohldman P."/>
        </authorList>
    </citation>
    <scope>NUCLEOTIDE SEQUENCE [LARGE SCALE GENOMIC DNA]</scope>
    <source>
        <strain>Bristol N2</strain>
    </source>
</reference>
<reference key="2">
    <citation type="journal article" date="1998" name="Science">
        <title>Genome sequence of the nematode C. elegans: a platform for investigating biology.</title>
        <authorList>
            <consortium name="The C. elegans sequencing consortium"/>
        </authorList>
    </citation>
    <scope>NUCLEOTIDE SEQUENCE [LARGE SCALE GENOMIC DNA]</scope>
    <source>
        <strain>Bristol N2</strain>
    </source>
</reference>
<reference key="3">
    <citation type="journal article" date="1999" name="Nature">
        <title>A histone-H3-like protein in C. elegans.</title>
        <authorList>
            <person name="Buchwitz B.J."/>
            <person name="Ahmad K."/>
            <person name="Moore L.L."/>
            <person name="Roth M.B."/>
            <person name="Henikoff S."/>
        </authorList>
    </citation>
    <scope>FUNCTION</scope>
    <scope>SUBCELLULAR LOCATION</scope>
</reference>
<reference key="4">
    <citation type="journal article" date="2001" name="J. Cell Biol.">
        <title>Functional analysis of kinetochore assembly in Caenorhabditis elegans.</title>
        <authorList>
            <person name="Oegema K."/>
            <person name="Desai A."/>
            <person name="Rybina S."/>
            <person name="Kirkham M."/>
            <person name="Hyman A.A."/>
        </authorList>
    </citation>
    <scope>FUNCTION</scope>
    <scope>SUBCELLULAR LOCATION</scope>
</reference>
<reference key="5">
    <citation type="journal article" date="2002" name="Genes Dev.">
        <title>Characterization of HCP-6, a C. elegans protein required to prevent chromosome twisting and merotelic attachment.</title>
        <authorList>
            <person name="Stear J.H."/>
            <person name="Roth M.B."/>
        </authorList>
    </citation>
    <scope>FUNCTION</scope>
    <scope>SUBCELLULAR LOCATION</scope>
    <scope>DISRUPTION PHENOTYPE</scope>
</reference>
<reference key="6">
    <citation type="journal article" date="2003" name="Genes Dev.">
        <title>KNL-1 directs assembly of the microtubule-binding interface of the kinetochore in C. elegans.</title>
        <authorList>
            <person name="Desai A."/>
            <person name="Rybina S."/>
            <person name="Mueller-Reichert T."/>
            <person name="Shevchenko A."/>
            <person name="Shevchenko A."/>
            <person name="Hyman A."/>
            <person name="Oegema K."/>
        </authorList>
    </citation>
    <scope>FUNCTION</scope>
</reference>
<reference key="7">
    <citation type="journal article" date="2005" name="Mol. Cell. Biol.">
        <title>HCP-4/CENP-C promotes the prophase timing of centromere resolution by enabling the centromere association of HCP-6 in Caenorhabditis elegans.</title>
        <authorList>
            <person name="Moore L.L."/>
            <person name="Stanvitch G."/>
            <person name="Roth M.B."/>
            <person name="Rosen D."/>
        </authorList>
    </citation>
    <scope>FUNCTION</scope>
    <scope>SUBCELLULAR LOCATION</scope>
</reference>
<reference key="8">
    <citation type="journal article" date="2005" name="Nat. Cell Biol.">
        <title>Differential role of CENP-A in the segregation of holocentric C. elegans chromosomes during meiosis and mitosis.</title>
        <authorList>
            <person name="Monen J."/>
            <person name="Maddox P.S."/>
            <person name="Hyndman F."/>
            <person name="Oegema K."/>
            <person name="Desai A."/>
        </authorList>
    </citation>
    <scope>FUNCTION</scope>
    <scope>INDUCTION</scope>
</reference>
<reference key="9">
    <citation type="journal article" date="2006" name="Curr. Biol.">
        <title>MEL-28, a novel nuclear-envelope and kinetochore protein essential for zygotic nuclear-envelope assembly in C. elegans.</title>
        <authorList>
            <person name="Galy V."/>
            <person name="Askjaer P."/>
            <person name="Franz C."/>
            <person name="Lopez-Iglesias C."/>
            <person name="Mattaj I.W."/>
        </authorList>
    </citation>
    <scope>FUNCTION</scope>
    <scope>DISRUPTION PHENOTYPE</scope>
</reference>
<reference key="10">
    <citation type="journal article" date="2006" name="Curr. Biol.">
        <title>MEL-28 is downstream of the Ran cycle and is required for nuclear-envelope function and chromatin maintenance.</title>
        <authorList>
            <person name="Fernandez A.G."/>
            <person name="Piano F."/>
        </authorList>
    </citation>
    <scope>FUNCTION</scope>
    <scope>DISRUPTION PHENOTYPE</scope>
</reference>
<reference key="11">
    <citation type="journal article" date="2006" name="Nat. Cell Biol.">
        <authorList>
            <person name="Monen J."/>
            <person name="Maddox P.S."/>
            <person name="Hyndman F."/>
            <person name="Oegema K."/>
            <person name="Desai A."/>
        </authorList>
    </citation>
    <scope>ERRATUM OF PUBMED:16950115</scope>
</reference>
<reference key="12">
    <citation type="journal article" date="2007" name="J. Cell Biol.">
        <title>Functional genomics identifies a Myb domain-containing protein family required for assembly of CENP-A chromatin.</title>
        <authorList>
            <person name="Maddox P.S."/>
            <person name="Hyndman F."/>
            <person name="Monen J."/>
            <person name="Oegema K."/>
            <person name="Desai A."/>
        </authorList>
    </citation>
    <scope>INTERACTION WITH KNL-2</scope>
    <scope>SUBCELLULAR LOCATION</scope>
    <scope>DISRUPTION PHENOTYPE</scope>
</reference>
<reference key="13">
    <citation type="journal article" date="2013" name="Curr. Biol.">
        <title>Condensin and the spindle midzone prevent cytokinesis failure induced by chromatin bridges in C. elegans embryos.</title>
        <authorList>
            <person name="Bembenek J.N."/>
            <person name="Verbrugghe K.J."/>
            <person name="Khanikar J."/>
            <person name="Csankovszki G."/>
            <person name="Chan R.C."/>
        </authorList>
    </citation>
    <scope>FUNCTION</scope>
    <scope>DISRUPTION PHENOTYPE</scope>
</reference>
<reference key="14">
    <citation type="journal article" date="2016" name="Cell Rep.">
        <title>RbAp46/48(LIN-53) is required for holocentromere assembly in Caenorhabditis elegans.</title>
        <authorList>
            <person name="Lee B.C."/>
            <person name="Lin Z."/>
            <person name="Yuen K.W."/>
        </authorList>
    </citation>
    <scope>INTERACTION WITH LIN-53</scope>
    <scope>SUBCELLULAR LOCATION</scope>
</reference>
<accession>P34470</accession>
<proteinExistence type="evidence at protein level"/>
<feature type="chain" id="PRO_0000221377" description="Histone H3-like centromeric protein hcp-3">
    <location>
        <begin position="1"/>
        <end position="288"/>
    </location>
</feature>
<feature type="region of interest" description="Disordered" evidence="2">
    <location>
        <begin position="96"/>
        <end position="194"/>
    </location>
</feature>
<feature type="region of interest" description="H3-like">
    <location>
        <begin position="191"/>
        <end position="288"/>
    </location>
</feature>
<feature type="compositionally biased region" description="Basic residues" evidence="2">
    <location>
        <begin position="178"/>
        <end position="193"/>
    </location>
</feature>
<protein>
    <recommendedName>
        <fullName>Histone H3-like centromeric protein hcp-3</fullName>
    </recommendedName>
    <alternativeName>
        <fullName>CENP-A homolog</fullName>
    </alternativeName>
    <alternativeName>
        <fullName>CeCENP-A</fullName>
    </alternativeName>
    <alternativeName>
        <fullName>Holocentric chromosome-binding protein 3</fullName>
    </alternativeName>
</protein>
<comment type="function">
    <text evidence="1 3 4 5 6 7 8 9 10 12">Histone H3-like variant which exclusively replaces conventional H3 in the nucleosome core of centromeric chromatin at the inner plate of the kinetochore (PubMed:10524621). Required for recruitment and assembly of kinetochore proteins, mitotic progression and chromosome segregation (PubMed:11402065, PubMed:12080088, PubMed:14522947, PubMed:15767665, PubMed:16273096, PubMed:16950114, PubMed:16950115). May serve as an epigenetic mark that propagates centromere identity through replication and cell division (By similarity). Might promote cleavage furrow stability during cytokinesis (PubMed:23684975). Not required for chromosome segregation during meiosis (PubMed:16273096).</text>
</comment>
<comment type="subunit">
    <text evidence="1 11 13">Forms a nucleosome-like histone octamer containing two molecules each of H2A, H2B, hcp-3 and H4 assembled in one hcp-3-H4 heterotetramer and two H2A-H2B heterodimers. The hcp-3-H4 heterotetramer is more compact and structurally more rigid than corresponding H3-H4 heterotetramers (By similarity). Interacts with knl-2 (PubMed:17339379). Interacts with lin-53 (PubMed:26904949).</text>
</comment>
<comment type="subcellular location">
    <subcellularLocation>
        <location evidence="3 4">Nucleus</location>
    </subcellularLocation>
    <subcellularLocation>
        <location evidence="5 7 11 13">Chromosome</location>
        <location evidence="5 7 11 13">Centromere</location>
    </subcellularLocation>
    <subcellularLocation>
        <location evidence="4">Chromosome</location>
        <location evidence="4">Centromere</location>
        <location evidence="4">Kinetochore</location>
    </subcellularLocation>
    <text evidence="4 5 7 11 13">Requires knl-2 and lin-53 for chromatin localization (PubMed:17339379, PubMed:26904949). Co-localizes with hcp-6 at prophase, metaphase, and anaphase chromosomes (PubMed:12080088, PubMed:15767665).</text>
</comment>
<comment type="induction">
    <text evidence="8">Present at higher lower (&gt;95%) level than cpar-1 (at protein level).</text>
</comment>
<comment type="disruption phenotype">
    <text evidence="5 9 10 11 12">RNAi-mediated knockdown impacts chromosome segregation leading to abnormal chromatin distribution (PubMed:16950114, PubMed:17339379). Disrupts mel-28 localization to kinetochores (PubMed:16950115). Leads to cleavage furrow regression and failed cytokinesis during the second embryonic division (PubMed:23684975). RNAi-mediated knockdown abolishes the localization of hcp-6 at the centromeres of mitotic chromosomes (PubMed:12080088).</text>
</comment>
<comment type="similarity">
    <text evidence="14">Belongs to the histone H3 family.</text>
</comment>
<evidence type="ECO:0000250" key="1">
    <source>
        <dbReference type="UniProtKB" id="P49450"/>
    </source>
</evidence>
<evidence type="ECO:0000256" key="2">
    <source>
        <dbReference type="SAM" id="MobiDB-lite"/>
    </source>
</evidence>
<evidence type="ECO:0000269" key="3">
    <source>
    </source>
</evidence>
<evidence type="ECO:0000269" key="4">
    <source>
    </source>
</evidence>
<evidence type="ECO:0000269" key="5">
    <source>
    </source>
</evidence>
<evidence type="ECO:0000269" key="6">
    <source>
    </source>
</evidence>
<evidence type="ECO:0000269" key="7">
    <source>
    </source>
</evidence>
<evidence type="ECO:0000269" key="8">
    <source>
    </source>
</evidence>
<evidence type="ECO:0000269" key="9">
    <source>
    </source>
</evidence>
<evidence type="ECO:0000269" key="10">
    <source>
    </source>
</evidence>
<evidence type="ECO:0000269" key="11">
    <source>
    </source>
</evidence>
<evidence type="ECO:0000269" key="12">
    <source>
    </source>
</evidence>
<evidence type="ECO:0000269" key="13">
    <source>
    </source>
</evidence>
<evidence type="ECO:0000305" key="14"/>
<evidence type="ECO:0000312" key="15">
    <source>
        <dbReference type="WormBase" id="F58A4.3"/>
    </source>
</evidence>
<name>HCP3_CAEEL</name>
<gene>
    <name evidence="15" type="primary">hcp-3</name>
    <name evidence="15" type="synonym">CENP-A</name>
    <name evidence="15" type="ORF">F58A4.3</name>
</gene>
<keyword id="KW-0137">Centromere</keyword>
<keyword id="KW-0158">Chromosome</keyword>
<keyword id="KW-0238">DNA-binding</keyword>
<keyword id="KW-0995">Kinetochore</keyword>
<keyword id="KW-0544">Nucleosome core</keyword>
<keyword id="KW-0539">Nucleus</keyword>
<keyword id="KW-1185">Reference proteome</keyword>
<organism>
    <name type="scientific">Caenorhabditis elegans</name>
    <dbReference type="NCBI Taxonomy" id="6239"/>
    <lineage>
        <taxon>Eukaryota</taxon>
        <taxon>Metazoa</taxon>
        <taxon>Ecdysozoa</taxon>
        <taxon>Nematoda</taxon>
        <taxon>Chromadorea</taxon>
        <taxon>Rhabditida</taxon>
        <taxon>Rhabditina</taxon>
        <taxon>Rhabditomorpha</taxon>
        <taxon>Rhabditoidea</taxon>
        <taxon>Rhabditidae</taxon>
        <taxon>Peloderinae</taxon>
        <taxon>Caenorhabditis</taxon>
    </lineage>
</organism>
<dbReference type="EMBL" id="BX284603">
    <property type="protein sequence ID" value="CAA80160.1"/>
    <property type="molecule type" value="Genomic_DNA"/>
</dbReference>
<dbReference type="PIR" id="S40975">
    <property type="entry name" value="S40975"/>
</dbReference>
<dbReference type="RefSeq" id="NP_499128.1">
    <property type="nucleotide sequence ID" value="NM_066727.7"/>
</dbReference>
<dbReference type="SMR" id="P34470"/>
<dbReference type="BioGRID" id="41554">
    <property type="interactions" value="38"/>
</dbReference>
<dbReference type="DIP" id="DIP-27043N"/>
<dbReference type="FunCoup" id="P34470">
    <property type="interactions" value="103"/>
</dbReference>
<dbReference type="IntAct" id="P34470">
    <property type="interactions" value="2"/>
</dbReference>
<dbReference type="STRING" id="6239.F58A4.3.1"/>
<dbReference type="PaxDb" id="6239-F58A4.3"/>
<dbReference type="PeptideAtlas" id="P34470"/>
<dbReference type="EnsemblMetazoa" id="F58A4.3.1">
    <property type="protein sequence ID" value="F58A4.3.1"/>
    <property type="gene ID" value="WBGene00001831"/>
</dbReference>
<dbReference type="GeneID" id="176359"/>
<dbReference type="KEGG" id="cel:CELE_F58A4.3"/>
<dbReference type="UCSC" id="F58A4.3">
    <property type="organism name" value="c. elegans"/>
</dbReference>
<dbReference type="AGR" id="WB:WBGene00001831"/>
<dbReference type="CTD" id="176359"/>
<dbReference type="WormBase" id="F58A4.3">
    <property type="protein sequence ID" value="CE00219"/>
    <property type="gene ID" value="WBGene00001831"/>
    <property type="gene designation" value="hcp-3"/>
</dbReference>
<dbReference type="eggNOG" id="KOG1745">
    <property type="taxonomic scope" value="Eukaryota"/>
</dbReference>
<dbReference type="GeneTree" id="ENSGT01130000278322"/>
<dbReference type="HOGENOM" id="CLU_071908_0_0_1"/>
<dbReference type="InParanoid" id="P34470"/>
<dbReference type="OrthoDB" id="5858439at2759"/>
<dbReference type="PhylomeDB" id="P34470"/>
<dbReference type="Reactome" id="R-CEL-2559580">
    <property type="pathway name" value="Oxidative Stress Induced Senescence"/>
</dbReference>
<dbReference type="Reactome" id="R-CEL-3214841">
    <property type="pathway name" value="PKMTs methylate histone lysines"/>
</dbReference>
<dbReference type="Reactome" id="R-CEL-3214842">
    <property type="pathway name" value="HDMs demethylate histones"/>
</dbReference>
<dbReference type="Reactome" id="R-CEL-3214847">
    <property type="pathway name" value="HATs acetylate histones"/>
</dbReference>
<dbReference type="Reactome" id="R-CEL-3214858">
    <property type="pathway name" value="RMTs methylate histone arginines"/>
</dbReference>
<dbReference type="Reactome" id="R-CEL-5250924">
    <property type="pathway name" value="B-WICH complex positively regulates rRNA expression"/>
</dbReference>
<dbReference type="Reactome" id="R-CEL-5578749">
    <property type="pathway name" value="Transcriptional regulation by small RNAs"/>
</dbReference>
<dbReference type="Reactome" id="R-CEL-68616">
    <property type="pathway name" value="Assembly of the ORC complex at the origin of replication"/>
</dbReference>
<dbReference type="Reactome" id="R-CEL-73772">
    <property type="pathway name" value="RNA Polymerase I Promoter Escape"/>
</dbReference>
<dbReference type="Reactome" id="R-CEL-8936459">
    <property type="pathway name" value="RUNX1 regulates genes involved in megakaryocyte differentiation and platelet function"/>
</dbReference>
<dbReference type="Reactome" id="R-CEL-983231">
    <property type="pathway name" value="Factors involved in megakaryocyte development and platelet production"/>
</dbReference>
<dbReference type="Reactome" id="R-CEL-9843940">
    <property type="pathway name" value="Regulation of endogenous retroelements by KRAB-ZFP proteins"/>
</dbReference>
<dbReference type="PRO" id="PR:P34470"/>
<dbReference type="Proteomes" id="UP000001940">
    <property type="component" value="Chromosome III"/>
</dbReference>
<dbReference type="Bgee" id="WBGene00001831">
    <property type="expression patterns" value="Expressed in germ line (C elegans) and 4 other cell types or tissues"/>
</dbReference>
<dbReference type="GO" id="GO:0000775">
    <property type="term" value="C:chromosome, centromeric region"/>
    <property type="evidence" value="ECO:0000314"/>
    <property type="project" value="UniProtKB"/>
</dbReference>
<dbReference type="GO" id="GO:0000779">
    <property type="term" value="C:condensed chromosome, centromeric region"/>
    <property type="evidence" value="ECO:0000314"/>
    <property type="project" value="WormBase"/>
</dbReference>
<dbReference type="GO" id="GO:0000776">
    <property type="term" value="C:kinetochore"/>
    <property type="evidence" value="ECO:0000315"/>
    <property type="project" value="UniProtKB"/>
</dbReference>
<dbReference type="GO" id="GO:0000786">
    <property type="term" value="C:nucleosome"/>
    <property type="evidence" value="ECO:0007669"/>
    <property type="project" value="UniProtKB-KW"/>
</dbReference>
<dbReference type="GO" id="GO:0005634">
    <property type="term" value="C:nucleus"/>
    <property type="evidence" value="ECO:0000314"/>
    <property type="project" value="UniProtKB"/>
</dbReference>
<dbReference type="GO" id="GO:0003677">
    <property type="term" value="F:DNA binding"/>
    <property type="evidence" value="ECO:0007669"/>
    <property type="project" value="UniProtKB-KW"/>
</dbReference>
<dbReference type="GO" id="GO:0046982">
    <property type="term" value="F:protein heterodimerization activity"/>
    <property type="evidence" value="ECO:0007669"/>
    <property type="project" value="InterPro"/>
</dbReference>
<dbReference type="GO" id="GO:0030527">
    <property type="term" value="F:structural constituent of chromatin"/>
    <property type="evidence" value="ECO:0007669"/>
    <property type="project" value="InterPro"/>
</dbReference>
<dbReference type="GO" id="GO:0009792">
    <property type="term" value="P:embryo development ending in birth or egg hatching"/>
    <property type="evidence" value="ECO:0000315"/>
    <property type="project" value="WormBase"/>
</dbReference>
<dbReference type="GO" id="GO:0070199">
    <property type="term" value="P:establishment of protein localization to chromosome"/>
    <property type="evidence" value="ECO:0000315"/>
    <property type="project" value="UniProtKB"/>
</dbReference>
<dbReference type="GO" id="GO:0051382">
    <property type="term" value="P:kinetochore assembly"/>
    <property type="evidence" value="ECO:0000314"/>
    <property type="project" value="UniProtKB"/>
</dbReference>
<dbReference type="GO" id="GO:0000278">
    <property type="term" value="P:mitotic cell cycle"/>
    <property type="evidence" value="ECO:0000315"/>
    <property type="project" value="UniProtKB"/>
</dbReference>
<dbReference type="GO" id="GO:0000070">
    <property type="term" value="P:mitotic sister chromatid segregation"/>
    <property type="evidence" value="ECO:0000315"/>
    <property type="project" value="WormBase"/>
</dbReference>
<dbReference type="GO" id="GO:0090307">
    <property type="term" value="P:mitotic spindle assembly"/>
    <property type="evidence" value="ECO:0000315"/>
    <property type="project" value="UniProtKB"/>
</dbReference>
<dbReference type="GO" id="GO:0007052">
    <property type="term" value="P:mitotic spindle organization"/>
    <property type="evidence" value="ECO:0000315"/>
    <property type="project" value="WormBase"/>
</dbReference>
<dbReference type="GO" id="GO:0046603">
    <property type="term" value="P:negative regulation of mitotic centrosome separation"/>
    <property type="evidence" value="ECO:0000315"/>
    <property type="project" value="UniProtKB"/>
</dbReference>
<dbReference type="GO" id="GO:0098813">
    <property type="term" value="P:nuclear chromosome segregation"/>
    <property type="evidence" value="ECO:0000315"/>
    <property type="project" value="UniProtKB"/>
</dbReference>
<dbReference type="GO" id="GO:0071459">
    <property type="term" value="P:protein localization to chromosome, centromeric region"/>
    <property type="evidence" value="ECO:0000315"/>
    <property type="project" value="UniProtKB"/>
</dbReference>
<dbReference type="CDD" id="cd22911">
    <property type="entry name" value="HFD_H3"/>
    <property type="match status" value="1"/>
</dbReference>
<dbReference type="FunFam" id="1.10.20.10:FF:000102">
    <property type="entry name" value="Histone H3-like centromeric protein CSE4"/>
    <property type="match status" value="1"/>
</dbReference>
<dbReference type="Gene3D" id="1.10.20.10">
    <property type="entry name" value="Histone, subunit A"/>
    <property type="match status" value="1"/>
</dbReference>
<dbReference type="InterPro" id="IPR009072">
    <property type="entry name" value="Histone-fold"/>
</dbReference>
<dbReference type="InterPro" id="IPR007125">
    <property type="entry name" value="Histone_H2A/H2B/H3"/>
</dbReference>
<dbReference type="InterPro" id="IPR000164">
    <property type="entry name" value="Histone_H3/CENP-A"/>
</dbReference>
<dbReference type="PANTHER" id="PTHR11426">
    <property type="entry name" value="HISTONE H3"/>
    <property type="match status" value="1"/>
</dbReference>
<dbReference type="Pfam" id="PF00125">
    <property type="entry name" value="Histone"/>
    <property type="match status" value="1"/>
</dbReference>
<dbReference type="PRINTS" id="PR00622">
    <property type="entry name" value="HISTONEH3"/>
</dbReference>
<dbReference type="SMART" id="SM00428">
    <property type="entry name" value="H3"/>
    <property type="match status" value="1"/>
</dbReference>
<dbReference type="SUPFAM" id="SSF47113">
    <property type="entry name" value="Histone-fold"/>
    <property type="match status" value="1"/>
</dbReference>
<dbReference type="PROSITE" id="PS00959">
    <property type="entry name" value="HISTONE_H3_2"/>
    <property type="match status" value="1"/>
</dbReference>